<evidence type="ECO:0000255" key="1"/>
<evidence type="ECO:0000256" key="2">
    <source>
        <dbReference type="SAM" id="MobiDB-lite"/>
    </source>
</evidence>
<evidence type="ECO:0000269" key="3">
    <source>
    </source>
</evidence>
<evidence type="ECO:0000269" key="4">
    <source>
    </source>
</evidence>
<evidence type="ECO:0000305" key="5"/>
<reference key="1">
    <citation type="journal article" date="1999" name="Insect Biochem. Mol. Biol.">
        <title>Characterisation of the helicostatin peptide precursor gene from Helicoverpa armigera (Lepidoptera: Noctuidae).</title>
        <authorList>
            <person name="Davey M."/>
            <person name="Duve H."/>
            <person name="Thorpe A."/>
            <person name="East P."/>
        </authorList>
    </citation>
    <scope>NUCLEOTIDE SEQUENCE [GENOMIC DNA]</scope>
    <scope>TISSUE SPECIFICITY</scope>
    <source>
        <tissue>CNS</tissue>
        <tissue>Gut</tissue>
    </source>
</reference>
<reference key="2">
    <citation type="journal article" date="1997" name="Peptides">
        <title>Lepidopteran peptides of the allatostatin superfamily.</title>
        <authorList>
            <person name="Duve H."/>
            <person name="Johnsen A.H."/>
            <person name="Maestro J.-L."/>
            <person name="Scott A.G."/>
            <person name="Winstanley D."/>
            <person name="Davey M."/>
            <person name="East P.D."/>
            <person name="Thorpe A."/>
        </authorList>
    </citation>
    <scope>PROTEIN SEQUENCE OF 51-58; 62-79; 83-90; 130-137; 152-159; 163-170; 174-181; 185-192 AND 196-206</scope>
    <scope>AMIDATION AT LEU-58; LEU-79; LEU-90; LEU-137; LEU-159; LEU-170; LEU-181; LEU-192 AND LEU-206</scope>
    <source>
        <tissue>Larva</tissue>
    </source>
</reference>
<organism>
    <name type="scientific">Helicoverpa armigera</name>
    <name type="common">Cotton bollworm</name>
    <name type="synonym">Heliothis armigera</name>
    <dbReference type="NCBI Taxonomy" id="29058"/>
    <lineage>
        <taxon>Eukaryota</taxon>
        <taxon>Metazoa</taxon>
        <taxon>Ecdysozoa</taxon>
        <taxon>Arthropoda</taxon>
        <taxon>Hexapoda</taxon>
        <taxon>Insecta</taxon>
        <taxon>Pterygota</taxon>
        <taxon>Neoptera</taxon>
        <taxon>Endopterygota</taxon>
        <taxon>Lepidoptera</taxon>
        <taxon>Glossata</taxon>
        <taxon>Ditrysia</taxon>
        <taxon>Noctuoidea</taxon>
        <taxon>Noctuidae</taxon>
        <taxon>Heliothinae</taxon>
        <taxon>Helicoverpa</taxon>
    </lineage>
</organism>
<accession>O44314</accession>
<proteinExistence type="evidence at protein level"/>
<comment type="function">
    <text>May act as a neurotransmitter or neuromodulator.</text>
</comment>
<comment type="subcellular location">
    <subcellularLocation>
        <location>Secreted</location>
    </subcellularLocation>
</comment>
<comment type="tissue specificity">
    <text evidence="3">Highly expressed in the CNS and gut of larvae. Also expressed in the cells of the larval brain and ventral nerve cord and in endocrine cells of the midgut.</text>
</comment>
<comment type="similarity">
    <text evidence="5">Belongs to the allatostatin family.</text>
</comment>
<dbReference type="EMBL" id="AF015296">
    <property type="protein sequence ID" value="AAB94674.1"/>
    <property type="molecule type" value="Genomic_DNA"/>
</dbReference>
<dbReference type="OrthoDB" id="10067964at2759"/>
<dbReference type="GO" id="GO:0005576">
    <property type="term" value="C:extracellular region"/>
    <property type="evidence" value="ECO:0007669"/>
    <property type="project" value="UniProtKB-SubCell"/>
</dbReference>
<dbReference type="GO" id="GO:0005184">
    <property type="term" value="F:neuropeptide hormone activity"/>
    <property type="evidence" value="ECO:0007669"/>
    <property type="project" value="InterPro"/>
</dbReference>
<dbReference type="GO" id="GO:0007218">
    <property type="term" value="P:neuropeptide signaling pathway"/>
    <property type="evidence" value="ECO:0007669"/>
    <property type="project" value="UniProtKB-KW"/>
</dbReference>
<dbReference type="InterPro" id="IPR010276">
    <property type="entry name" value="Allatostatin"/>
</dbReference>
<dbReference type="Pfam" id="PF05953">
    <property type="entry name" value="Allatostatin"/>
    <property type="match status" value="9"/>
</dbReference>
<keyword id="KW-0027">Amidation</keyword>
<keyword id="KW-0165">Cleavage on pair of basic residues</keyword>
<keyword id="KW-0903">Direct protein sequencing</keyword>
<keyword id="KW-0527">Neuropeptide</keyword>
<keyword id="KW-0964">Secreted</keyword>
<keyword id="KW-0732">Signal</keyword>
<protein>
    <recommendedName>
        <fullName>Helicostatins</fullName>
    </recommendedName>
    <component>
        <recommendedName>
            <fullName>Helicostatin-1</fullName>
        </recommendedName>
        <alternativeName>
            <fullName>Helicostatin I</fullName>
        </alternativeName>
    </component>
    <component>
        <recommendedName>
            <fullName>Helicostatin-2a</fullName>
        </recommendedName>
        <alternativeName>
            <fullName>Helicostatin IIa</fullName>
        </alternativeName>
    </component>
    <component>
        <recommendedName>
            <fullName>Helicostatin-2b</fullName>
        </recommendedName>
        <alternativeName>
            <fullName>Helicostatin IIb</fullName>
        </alternativeName>
    </component>
    <component>
        <recommendedName>
            <fullName>Helicostatin-3</fullName>
        </recommendedName>
        <alternativeName>
            <fullName>Helicostatin III</fullName>
        </alternativeName>
    </component>
    <component>
        <recommendedName>
            <fullName>Helicostatin-4</fullName>
        </recommendedName>
        <alternativeName>
            <fullName>Helicostatin IV</fullName>
        </alternativeName>
    </component>
    <component>
        <recommendedName>
            <fullName>Helicostatin-5</fullName>
        </recommendedName>
        <alternativeName>
            <fullName>Helicostatin V</fullName>
        </alternativeName>
    </component>
    <component>
        <recommendedName>
            <fullName>Helicostatin-6</fullName>
        </recommendedName>
        <alternativeName>
            <fullName>Helicostatin VI</fullName>
        </alternativeName>
    </component>
    <component>
        <recommendedName>
            <fullName>Helicostatin-7</fullName>
        </recommendedName>
        <alternativeName>
            <fullName>Helicostatin VII</fullName>
        </alternativeName>
    </component>
    <component>
        <recommendedName>
            <fullName>Helicostatin-8</fullName>
        </recommendedName>
        <alternativeName>
            <fullName>Helicostatin VIII</fullName>
        </alternativeName>
    </component>
    <component>
        <recommendedName>
            <fullName>Helicostatin-9</fullName>
        </recommendedName>
        <alternativeName>
            <fullName>Helicostatin IX</fullName>
        </alternativeName>
    </component>
</protein>
<sequence>MLYSSLPVCFLVLGAALCAPERMQNEAEPHDLQPHEAEPHSDHVAPLAKRSPHYDFGLGKRAYSYVSEYKRLPVYNFGLGKRSRPYSFGLGKRSVDEDQSNDEQQLTTSDLDQAALAELFDQYDDAEKRARPYSFGLGKRFADDETSEEKRARAYDFGLGKRLPMYNFGLGKRARSYNFGLGKRYSKFNFGLGKRERDMHRFSFGLGKRSGDDVSADDSDNYFDV</sequence>
<name>ALLP_HELAM</name>
<feature type="signal peptide" evidence="1">
    <location>
        <begin position="1"/>
        <end position="18"/>
    </location>
</feature>
<feature type="propeptide" id="PRO_0000001164">
    <location>
        <begin position="19"/>
        <end position="48"/>
    </location>
</feature>
<feature type="peptide" id="PRO_0000001165" description="Helicostatin-1">
    <location>
        <begin position="51"/>
        <end position="58"/>
    </location>
</feature>
<feature type="peptide" id="PRO_0000001166" description="Helicostatin-2a">
    <location>
        <begin position="62"/>
        <end position="79"/>
    </location>
</feature>
<feature type="peptide" id="PRO_0000001167" description="Helicostatin-2b">
    <location>
        <begin position="72"/>
        <end position="79"/>
    </location>
</feature>
<feature type="peptide" id="PRO_0000001168" description="Helicostatin-3">
    <location>
        <begin position="83"/>
        <end position="90"/>
    </location>
</feature>
<feature type="propeptide" id="PRO_0000001169">
    <location>
        <begin position="94"/>
        <end position="127"/>
    </location>
</feature>
<feature type="peptide" id="PRO_0000001170" description="Helicostatin-4">
    <location>
        <begin position="130"/>
        <end position="137"/>
    </location>
</feature>
<feature type="propeptide" id="PRO_0000001171">
    <location>
        <begin position="141"/>
        <end position="149"/>
    </location>
</feature>
<feature type="peptide" id="PRO_0000001172" description="Helicostatin-5">
    <location>
        <begin position="152"/>
        <end position="159"/>
    </location>
</feature>
<feature type="peptide" id="PRO_0000001173" description="Helicostatin-6">
    <location>
        <begin position="163"/>
        <end position="170"/>
    </location>
</feature>
<feature type="peptide" id="PRO_0000001174" description="Helicostatin-7">
    <location>
        <begin position="174"/>
        <end position="181"/>
    </location>
</feature>
<feature type="peptide" id="PRO_0000001175" description="Helicostatin-8">
    <location>
        <begin position="185"/>
        <end position="192"/>
    </location>
</feature>
<feature type="peptide" id="PRO_0000001176" description="Helicostatin-9">
    <location>
        <begin position="196"/>
        <end position="206"/>
    </location>
</feature>
<feature type="propeptide" id="PRO_0000001177">
    <location>
        <begin position="210"/>
        <end position="225"/>
    </location>
</feature>
<feature type="region of interest" description="Disordered" evidence="2">
    <location>
        <begin position="205"/>
        <end position="225"/>
    </location>
</feature>
<feature type="compositionally biased region" description="Acidic residues" evidence="2">
    <location>
        <begin position="214"/>
        <end position="225"/>
    </location>
</feature>
<feature type="modified residue" description="Leucine amide" evidence="4">
    <location>
        <position position="58"/>
    </location>
</feature>
<feature type="modified residue" description="Leucine amide" evidence="4">
    <location>
        <position position="79"/>
    </location>
</feature>
<feature type="modified residue" description="Leucine amide" evidence="4">
    <location>
        <position position="90"/>
    </location>
</feature>
<feature type="modified residue" description="Leucine amide" evidence="4">
    <location>
        <position position="137"/>
    </location>
</feature>
<feature type="modified residue" description="Leucine amide" evidence="4">
    <location>
        <position position="159"/>
    </location>
</feature>
<feature type="modified residue" description="Leucine amide" evidence="4">
    <location>
        <position position="170"/>
    </location>
</feature>
<feature type="modified residue" description="Leucine amide" evidence="4">
    <location>
        <position position="181"/>
    </location>
</feature>
<feature type="modified residue" description="Leucine amide" evidence="4">
    <location>
        <position position="192"/>
    </location>
</feature>
<feature type="modified residue" description="Leucine amide" evidence="4">
    <location>
        <position position="206"/>
    </location>
</feature>